<accession>P43412</accession>
<protein>
    <recommendedName>
        <fullName evidence="1">Adenylate kinase</fullName>
        <shortName evidence="1">AK</shortName>
        <ecNumber evidence="1">2.7.4.3</ecNumber>
    </recommendedName>
    <alternativeName>
        <fullName evidence="1">ATP-AMP transphosphorylase</fullName>
    </alternativeName>
    <alternativeName>
        <fullName evidence="1">ATP:AMP phosphotransferase</fullName>
    </alternativeName>
    <alternativeName>
        <fullName evidence="1">Adenylate monophosphate kinase</fullName>
    </alternativeName>
</protein>
<reference key="1">
    <citation type="journal article" date="1995" name="Mol. Microbiol.">
        <title>A novel locus of Yersinia enterocolitica serotype O:3 involved in lipopolysaccharide outer core biosynthesis.</title>
        <authorList>
            <person name="Skurnik M."/>
            <person name="Venho R."/>
            <person name="Toivanen P."/>
            <person name="Al-Hendy A."/>
        </authorList>
    </citation>
    <scope>NUCLEOTIDE SEQUENCE [GENOMIC DNA]</scope>
    <source>
        <strain>6471/76 / Serotype O:3</strain>
    </source>
</reference>
<comment type="function">
    <text evidence="1">Catalyzes the reversible transfer of the terminal phosphate group between ATP and AMP. Plays an important role in cellular energy homeostasis and in adenine nucleotide metabolism.</text>
</comment>
<comment type="catalytic activity">
    <reaction evidence="1">
        <text>AMP + ATP = 2 ADP</text>
        <dbReference type="Rhea" id="RHEA:12973"/>
        <dbReference type="ChEBI" id="CHEBI:30616"/>
        <dbReference type="ChEBI" id="CHEBI:456215"/>
        <dbReference type="ChEBI" id="CHEBI:456216"/>
        <dbReference type="EC" id="2.7.4.3"/>
    </reaction>
</comment>
<comment type="pathway">
    <text evidence="1">Purine metabolism; AMP biosynthesis via salvage pathway; AMP from ADP: step 1/1.</text>
</comment>
<comment type="subunit">
    <text evidence="1">Monomer.</text>
</comment>
<comment type="subcellular location">
    <subcellularLocation>
        <location evidence="1">Cytoplasm</location>
    </subcellularLocation>
</comment>
<comment type="domain">
    <text evidence="1">Consists of three domains, a large central CORE domain and two small peripheral domains, NMPbind and LID, which undergo movements during catalysis. The LID domain closes over the site of phosphoryl transfer upon ATP binding. Assembling and dissambling the active center during each catalytic cycle provides an effective means to prevent ATP hydrolysis.</text>
</comment>
<comment type="similarity">
    <text evidence="1">Belongs to the adenylate kinase family.</text>
</comment>
<sequence>MRIILLGAPGAGKGTQAQFIMEKYGIPQMCTGDMLRAAVKAGSELGLKAKEIMDAGKLVTHELVIALVKERITQDDCRDGFLLHGFPRTIPQADAMKEAGIKVDYVLEFDVPDELIVDRIVGRRVHAASGRVYHIKFNPPKVEDKDDVTGEELTIRKDDQEATVRKRLVEYHQQTAPLVSYYRKEADAGNTQYFKLDGTRKVAEVSAELATILG</sequence>
<name>KAD_YEREN</name>
<gene>
    <name evidence="1" type="primary">adk</name>
</gene>
<proteinExistence type="inferred from homology"/>
<organism>
    <name type="scientific">Yersinia enterocolitica</name>
    <dbReference type="NCBI Taxonomy" id="630"/>
    <lineage>
        <taxon>Bacteria</taxon>
        <taxon>Pseudomonadati</taxon>
        <taxon>Pseudomonadota</taxon>
        <taxon>Gammaproteobacteria</taxon>
        <taxon>Enterobacterales</taxon>
        <taxon>Yersiniaceae</taxon>
        <taxon>Yersinia</taxon>
    </lineage>
</organism>
<keyword id="KW-0067">ATP-binding</keyword>
<keyword id="KW-0963">Cytoplasm</keyword>
<keyword id="KW-0418">Kinase</keyword>
<keyword id="KW-0545">Nucleotide biosynthesis</keyword>
<keyword id="KW-0547">Nucleotide-binding</keyword>
<keyword id="KW-0808">Transferase</keyword>
<feature type="chain" id="PRO_0000158893" description="Adenylate kinase">
    <location>
        <begin position="1"/>
        <end position="214"/>
    </location>
</feature>
<feature type="region of interest" description="NMP" evidence="1">
    <location>
        <begin position="30"/>
        <end position="59"/>
    </location>
</feature>
<feature type="region of interest" description="LID">
    <location>
        <begin position="122"/>
        <end position="159"/>
    </location>
</feature>
<feature type="binding site" evidence="1">
    <location>
        <begin position="10"/>
        <end position="15"/>
    </location>
    <ligand>
        <name>ATP</name>
        <dbReference type="ChEBI" id="CHEBI:30616"/>
    </ligand>
</feature>
<feature type="binding site" evidence="1">
    <location>
        <position position="31"/>
    </location>
    <ligand>
        <name>AMP</name>
        <dbReference type="ChEBI" id="CHEBI:456215"/>
    </ligand>
</feature>
<feature type="binding site" evidence="1">
    <location>
        <position position="36"/>
    </location>
    <ligand>
        <name>AMP</name>
        <dbReference type="ChEBI" id="CHEBI:456215"/>
    </ligand>
</feature>
<feature type="binding site" evidence="1">
    <location>
        <begin position="57"/>
        <end position="59"/>
    </location>
    <ligand>
        <name>AMP</name>
        <dbReference type="ChEBI" id="CHEBI:456215"/>
    </ligand>
</feature>
<feature type="binding site" evidence="1">
    <location>
        <begin position="85"/>
        <end position="88"/>
    </location>
    <ligand>
        <name>AMP</name>
        <dbReference type="ChEBI" id="CHEBI:456215"/>
    </ligand>
</feature>
<feature type="binding site" evidence="1">
    <location>
        <position position="92"/>
    </location>
    <ligand>
        <name>AMP</name>
        <dbReference type="ChEBI" id="CHEBI:456215"/>
    </ligand>
</feature>
<feature type="binding site" evidence="1">
    <location>
        <position position="123"/>
    </location>
    <ligand>
        <name>ATP</name>
        <dbReference type="ChEBI" id="CHEBI:30616"/>
    </ligand>
</feature>
<feature type="binding site" evidence="1">
    <location>
        <begin position="132"/>
        <end position="133"/>
    </location>
    <ligand>
        <name>ATP</name>
        <dbReference type="ChEBI" id="CHEBI:30616"/>
    </ligand>
</feature>
<feature type="binding site" evidence="1">
    <location>
        <position position="156"/>
    </location>
    <ligand>
        <name>AMP</name>
        <dbReference type="ChEBI" id="CHEBI:456215"/>
    </ligand>
</feature>
<feature type="binding site" evidence="1">
    <location>
        <position position="167"/>
    </location>
    <ligand>
        <name>AMP</name>
        <dbReference type="ChEBI" id="CHEBI:456215"/>
    </ligand>
</feature>
<feature type="binding site" evidence="1">
    <location>
        <position position="200"/>
    </location>
    <ligand>
        <name>ATP</name>
        <dbReference type="ChEBI" id="CHEBI:30616"/>
    </ligand>
</feature>
<evidence type="ECO:0000255" key="1">
    <source>
        <dbReference type="HAMAP-Rule" id="MF_00235"/>
    </source>
</evidence>
<dbReference type="EC" id="2.7.4.3" evidence="1"/>
<dbReference type="EMBL" id="Z47767">
    <property type="protein sequence ID" value="CAA87696.1"/>
    <property type="molecule type" value="Genomic_DNA"/>
</dbReference>
<dbReference type="PIR" id="S70734">
    <property type="entry name" value="S70734"/>
</dbReference>
<dbReference type="SMR" id="P43412"/>
<dbReference type="STRING" id="1443113.LC20_01452"/>
<dbReference type="eggNOG" id="COG0563">
    <property type="taxonomic scope" value="Bacteria"/>
</dbReference>
<dbReference type="UniPathway" id="UPA00588">
    <property type="reaction ID" value="UER00649"/>
</dbReference>
<dbReference type="GO" id="GO:0005737">
    <property type="term" value="C:cytoplasm"/>
    <property type="evidence" value="ECO:0007669"/>
    <property type="project" value="UniProtKB-SubCell"/>
</dbReference>
<dbReference type="GO" id="GO:0004017">
    <property type="term" value="F:adenylate kinase activity"/>
    <property type="evidence" value="ECO:0007669"/>
    <property type="project" value="UniProtKB-UniRule"/>
</dbReference>
<dbReference type="GO" id="GO:0005524">
    <property type="term" value="F:ATP binding"/>
    <property type="evidence" value="ECO:0007669"/>
    <property type="project" value="UniProtKB-UniRule"/>
</dbReference>
<dbReference type="GO" id="GO:0044209">
    <property type="term" value="P:AMP salvage"/>
    <property type="evidence" value="ECO:0007669"/>
    <property type="project" value="UniProtKB-UniRule"/>
</dbReference>
<dbReference type="CDD" id="cd01428">
    <property type="entry name" value="ADK"/>
    <property type="match status" value="1"/>
</dbReference>
<dbReference type="FunFam" id="3.40.50.300:FF:000106">
    <property type="entry name" value="Adenylate kinase mitochondrial"/>
    <property type="match status" value="1"/>
</dbReference>
<dbReference type="Gene3D" id="3.40.50.300">
    <property type="entry name" value="P-loop containing nucleotide triphosphate hydrolases"/>
    <property type="match status" value="1"/>
</dbReference>
<dbReference type="HAMAP" id="MF_00235">
    <property type="entry name" value="Adenylate_kinase_Adk"/>
    <property type="match status" value="1"/>
</dbReference>
<dbReference type="InterPro" id="IPR006259">
    <property type="entry name" value="Adenyl_kin_sub"/>
</dbReference>
<dbReference type="InterPro" id="IPR000850">
    <property type="entry name" value="Adenylat/UMP-CMP_kin"/>
</dbReference>
<dbReference type="InterPro" id="IPR007862">
    <property type="entry name" value="Adenylate_kinase_lid-dom"/>
</dbReference>
<dbReference type="InterPro" id="IPR027417">
    <property type="entry name" value="P-loop_NTPase"/>
</dbReference>
<dbReference type="NCBIfam" id="TIGR01351">
    <property type="entry name" value="adk"/>
    <property type="match status" value="1"/>
</dbReference>
<dbReference type="NCBIfam" id="NF001379">
    <property type="entry name" value="PRK00279.1-1"/>
    <property type="match status" value="1"/>
</dbReference>
<dbReference type="NCBIfam" id="NF001380">
    <property type="entry name" value="PRK00279.1-2"/>
    <property type="match status" value="1"/>
</dbReference>
<dbReference type="NCBIfam" id="NF001381">
    <property type="entry name" value="PRK00279.1-3"/>
    <property type="match status" value="1"/>
</dbReference>
<dbReference type="PANTHER" id="PTHR23359">
    <property type="entry name" value="NUCLEOTIDE KINASE"/>
    <property type="match status" value="1"/>
</dbReference>
<dbReference type="Pfam" id="PF00406">
    <property type="entry name" value="ADK"/>
    <property type="match status" value="1"/>
</dbReference>
<dbReference type="Pfam" id="PF05191">
    <property type="entry name" value="ADK_lid"/>
    <property type="match status" value="1"/>
</dbReference>
<dbReference type="PRINTS" id="PR00094">
    <property type="entry name" value="ADENYLTKNASE"/>
</dbReference>
<dbReference type="SUPFAM" id="SSF52540">
    <property type="entry name" value="P-loop containing nucleoside triphosphate hydrolases"/>
    <property type="match status" value="1"/>
</dbReference>